<evidence type="ECO:0000250" key="1"/>
<evidence type="ECO:0000255" key="2"/>
<evidence type="ECO:0000305" key="3"/>
<proteinExistence type="inferred from homology"/>
<feature type="chain" id="PRO_0000118229" description="NADH-ubiquinone oxidoreductase chain 6">
    <location>
        <begin position="1"/>
        <end position="260"/>
    </location>
</feature>
<feature type="transmembrane region" description="Helical" evidence="2">
    <location>
        <begin position="2"/>
        <end position="22"/>
    </location>
</feature>
<feature type="transmembrane region" description="Helical" evidence="2">
    <location>
        <begin position="30"/>
        <end position="50"/>
    </location>
</feature>
<feature type="transmembrane region" description="Helical" evidence="2">
    <location>
        <begin position="52"/>
        <end position="72"/>
    </location>
</feature>
<feature type="transmembrane region" description="Helical" evidence="2">
    <location>
        <begin position="101"/>
        <end position="121"/>
    </location>
</feature>
<feature type="transmembrane region" description="Helical" evidence="2">
    <location>
        <begin position="142"/>
        <end position="162"/>
    </location>
</feature>
<feature type="transmembrane region" description="Helical" evidence="2">
    <location>
        <begin position="211"/>
        <end position="231"/>
    </location>
</feature>
<geneLocation type="mitochondrion"/>
<dbReference type="EC" id="7.1.1.2"/>
<dbReference type="EMBL" id="U12386">
    <property type="protein sequence ID" value="AAD11822.1"/>
    <property type="molecule type" value="Genomic_DNA"/>
</dbReference>
<dbReference type="PIR" id="S53830">
    <property type="entry name" value="S53830"/>
</dbReference>
<dbReference type="RefSeq" id="NP_042529.1">
    <property type="nucleotide sequence ID" value="NC_001637.1"/>
</dbReference>
<dbReference type="SMR" id="Q37371"/>
<dbReference type="GeneID" id="1734024"/>
<dbReference type="GO" id="GO:0031966">
    <property type="term" value="C:mitochondrial membrane"/>
    <property type="evidence" value="ECO:0007669"/>
    <property type="project" value="UniProtKB-SubCell"/>
</dbReference>
<dbReference type="GO" id="GO:0008137">
    <property type="term" value="F:NADH dehydrogenase (ubiquinone) activity"/>
    <property type="evidence" value="ECO:0007669"/>
    <property type="project" value="UniProtKB-EC"/>
</dbReference>
<dbReference type="Gene3D" id="1.20.120.1200">
    <property type="entry name" value="NADH-ubiquinone/plastoquinone oxidoreductase chain 6, subunit NuoJ"/>
    <property type="match status" value="1"/>
</dbReference>
<dbReference type="InterPro" id="IPR001457">
    <property type="entry name" value="NADH_UbQ/plastoQ_OxRdtase_su6"/>
</dbReference>
<dbReference type="InterPro" id="IPR042106">
    <property type="entry name" value="Nuo/plastoQ_OxRdtase_6_NuoJ"/>
</dbReference>
<dbReference type="PANTHER" id="PTHR33269">
    <property type="entry name" value="NADH-UBIQUINONE OXIDOREDUCTASE CHAIN 6"/>
    <property type="match status" value="1"/>
</dbReference>
<dbReference type="PANTHER" id="PTHR33269:SF17">
    <property type="entry name" value="NADH-UBIQUINONE OXIDOREDUCTASE CHAIN 6"/>
    <property type="match status" value="1"/>
</dbReference>
<dbReference type="Pfam" id="PF00499">
    <property type="entry name" value="Oxidored_q3"/>
    <property type="match status" value="1"/>
</dbReference>
<comment type="function">
    <text evidence="1">Core subunit of the mitochondrial membrane respiratory chain NADH dehydrogenase (Complex I) that is believed to belong to the minimal assembly required for catalysis. Complex I functions in the transfer of electrons from NADH to the respiratory chain. The immediate electron acceptor for the enzyme is believed to be ubiquinone (By similarity).</text>
</comment>
<comment type="catalytic activity">
    <reaction>
        <text>a ubiquinone + NADH + 5 H(+)(in) = a ubiquinol + NAD(+) + 4 H(+)(out)</text>
        <dbReference type="Rhea" id="RHEA:29091"/>
        <dbReference type="Rhea" id="RHEA-COMP:9565"/>
        <dbReference type="Rhea" id="RHEA-COMP:9566"/>
        <dbReference type="ChEBI" id="CHEBI:15378"/>
        <dbReference type="ChEBI" id="CHEBI:16389"/>
        <dbReference type="ChEBI" id="CHEBI:17976"/>
        <dbReference type="ChEBI" id="CHEBI:57540"/>
        <dbReference type="ChEBI" id="CHEBI:57945"/>
        <dbReference type="EC" id="7.1.1.2"/>
    </reaction>
</comment>
<comment type="subcellular location">
    <subcellularLocation>
        <location evidence="3">Mitochondrion membrane</location>
        <topology evidence="3">Multi-pass membrane protein</topology>
    </subcellularLocation>
</comment>
<comment type="similarity">
    <text evidence="3">Belongs to the complex I subunit 6 family.</text>
</comment>
<keyword id="KW-0249">Electron transport</keyword>
<keyword id="KW-0472">Membrane</keyword>
<keyword id="KW-0496">Mitochondrion</keyword>
<keyword id="KW-0520">NAD</keyword>
<keyword id="KW-0679">Respiratory chain</keyword>
<keyword id="KW-1278">Translocase</keyword>
<keyword id="KW-0812">Transmembrane</keyword>
<keyword id="KW-1133">Transmembrane helix</keyword>
<keyword id="KW-0813">Transport</keyword>
<keyword id="KW-0830">Ubiquinone</keyword>
<accession>Q37371</accession>
<sequence length="260" mass="29816">MLTNYLLIIFCFLALFCSFMIIASKNPIHSILYLILVFCNVTFVLIILGVEFIAIIFLIVYVGAIAVLFLFVVMMLNIKILELDEVFWRYIPAGLLISSCFLFQLFTFVFNFSVVEVFGLFFYNGFYSINKLALNFSEIHTVPSGLLINGIYIFPNLSNLGIDQVFINSIYKEESFFCFVKLNEASTNLLGLSFELTNTEILGWLVYTYTFFIFLVVSLILLISMIGSIILVLNQNINIKRQVIFRQSLRDLKSSVSLKN</sequence>
<gene>
    <name type="primary">ND6</name>
    <name type="synonym">NAD6</name>
</gene>
<organism>
    <name type="scientific">Acanthamoeba castellanii</name>
    <name type="common">Amoeba</name>
    <dbReference type="NCBI Taxonomy" id="5755"/>
    <lineage>
        <taxon>Eukaryota</taxon>
        <taxon>Amoebozoa</taxon>
        <taxon>Discosea</taxon>
        <taxon>Longamoebia</taxon>
        <taxon>Centramoebida</taxon>
        <taxon>Acanthamoebidae</taxon>
        <taxon>Acanthamoeba</taxon>
    </lineage>
</organism>
<protein>
    <recommendedName>
        <fullName>NADH-ubiquinone oxidoreductase chain 6</fullName>
        <ecNumber>7.1.1.2</ecNumber>
    </recommendedName>
    <alternativeName>
        <fullName>NADH dehydrogenase subunit 6</fullName>
    </alternativeName>
</protein>
<reference key="1">
    <citation type="journal article" date="1995" name="J. Mol. Biol.">
        <title>The mitochondrial DNA of the amoeboid protozoon, Acanthamoeba castellanii: complete sequence, gene content and genome organization.</title>
        <authorList>
            <person name="Burger G."/>
            <person name="Plante I."/>
            <person name="Lonergan K.M."/>
            <person name="Gray M.W."/>
        </authorList>
    </citation>
    <scope>NUCLEOTIDE SEQUENCE [GENOMIC DNA]</scope>
    <source>
        <strain>ATCC 30010 / Neff</strain>
    </source>
</reference>
<name>NU6M_ACACA</name>